<keyword id="KW-0010">Activator</keyword>
<keyword id="KW-1186">Ciliopathy</keyword>
<keyword id="KW-0970">Cilium biogenesis/degradation</keyword>
<keyword id="KW-0225">Disease variant</keyword>
<keyword id="KW-0238">DNA-binding</keyword>
<keyword id="KW-0539">Nucleus</keyword>
<keyword id="KW-0990">Primary ciliary dyskinesia</keyword>
<keyword id="KW-1267">Proteomics identification</keyword>
<keyword id="KW-1185">Reference proteome</keyword>
<keyword id="KW-0804">Transcription</keyword>
<keyword id="KW-0805">Transcription regulation</keyword>
<dbReference type="EMBL" id="U69537">
    <property type="protein sequence ID" value="AAB09039.1"/>
    <property type="molecule type" value="mRNA"/>
</dbReference>
<dbReference type="EMBL" id="X99349">
    <property type="protein sequence ID" value="CAA67729.1"/>
    <property type="molecule type" value="mRNA"/>
</dbReference>
<dbReference type="EMBL" id="X99350">
    <property type="protein sequence ID" value="CAA67730.1"/>
    <property type="molecule type" value="Genomic_DNA"/>
</dbReference>
<dbReference type="EMBL" id="X99351">
    <property type="protein sequence ID" value="CAA67730.1"/>
    <property type="status" value="JOINED"/>
    <property type="molecule type" value="Genomic_DNA"/>
</dbReference>
<dbReference type="EMBL" id="AJ272064">
    <property type="protein sequence ID" value="CAB76562.1"/>
    <property type="molecule type" value="Genomic_DNA"/>
</dbReference>
<dbReference type="EMBL" id="BC046460">
    <property type="protein sequence ID" value="AAH46460.1"/>
    <property type="molecule type" value="mRNA"/>
</dbReference>
<dbReference type="CCDS" id="CCDS32739.1"/>
<dbReference type="RefSeq" id="NP_001445.2">
    <property type="nucleotide sequence ID" value="NM_001454.4"/>
</dbReference>
<dbReference type="RefSeq" id="XP_047291622.1">
    <property type="nucleotide sequence ID" value="XM_047435666.1"/>
</dbReference>
<dbReference type="SMR" id="Q92949"/>
<dbReference type="BioGRID" id="108591">
    <property type="interactions" value="27"/>
</dbReference>
<dbReference type="FunCoup" id="Q92949">
    <property type="interactions" value="954"/>
</dbReference>
<dbReference type="IntAct" id="Q92949">
    <property type="interactions" value="26"/>
</dbReference>
<dbReference type="MINT" id="Q92949"/>
<dbReference type="STRING" id="9606.ENSP00000323880"/>
<dbReference type="iPTMnet" id="Q92949"/>
<dbReference type="PhosphoSitePlus" id="Q92949"/>
<dbReference type="BioMuta" id="FOXJ1"/>
<dbReference type="DMDM" id="12644465"/>
<dbReference type="jPOST" id="Q92949"/>
<dbReference type="MassIVE" id="Q92949"/>
<dbReference type="PaxDb" id="9606-ENSP00000323880"/>
<dbReference type="PeptideAtlas" id="Q92949"/>
<dbReference type="ProteomicsDB" id="75620"/>
<dbReference type="Antibodypedia" id="1443">
    <property type="antibodies" value="246 antibodies from 33 providers"/>
</dbReference>
<dbReference type="DNASU" id="2302"/>
<dbReference type="Ensembl" id="ENST00000322957.7">
    <property type="protein sequence ID" value="ENSP00000323880.4"/>
    <property type="gene ID" value="ENSG00000129654.8"/>
</dbReference>
<dbReference type="GeneID" id="2302"/>
<dbReference type="KEGG" id="hsa:2302"/>
<dbReference type="MANE-Select" id="ENST00000322957.7">
    <property type="protein sequence ID" value="ENSP00000323880.4"/>
    <property type="RefSeq nucleotide sequence ID" value="NM_001454.4"/>
    <property type="RefSeq protein sequence ID" value="NP_001445.2"/>
</dbReference>
<dbReference type="UCSC" id="uc002jqx.4">
    <property type="organism name" value="human"/>
</dbReference>
<dbReference type="AGR" id="HGNC:3816"/>
<dbReference type="CTD" id="2302"/>
<dbReference type="DisGeNET" id="2302"/>
<dbReference type="GeneCards" id="FOXJ1"/>
<dbReference type="HGNC" id="HGNC:3816">
    <property type="gene designation" value="FOXJ1"/>
</dbReference>
<dbReference type="HPA" id="ENSG00000129654">
    <property type="expression patterns" value="Tissue enhanced (choroid plexus, fallopian tube)"/>
</dbReference>
<dbReference type="MalaCards" id="FOXJ1"/>
<dbReference type="MIM" id="602291">
    <property type="type" value="gene"/>
</dbReference>
<dbReference type="MIM" id="607154">
    <property type="type" value="phenotype"/>
</dbReference>
<dbReference type="MIM" id="618699">
    <property type="type" value="phenotype"/>
</dbReference>
<dbReference type="neXtProt" id="NX_Q92949"/>
<dbReference type="OpenTargets" id="ENSG00000129654"/>
<dbReference type="Orphanet" id="244">
    <property type="disease" value="Primary ciliary dyskinesia"/>
</dbReference>
<dbReference type="PharmGKB" id="PA28233"/>
<dbReference type="VEuPathDB" id="HostDB:ENSG00000129654"/>
<dbReference type="eggNOG" id="KOG2294">
    <property type="taxonomic scope" value="Eukaryota"/>
</dbReference>
<dbReference type="GeneTree" id="ENSGT00940000156895"/>
<dbReference type="HOGENOM" id="CLU_050055_0_0_1"/>
<dbReference type="InParanoid" id="Q92949"/>
<dbReference type="OMA" id="WARPLTV"/>
<dbReference type="OrthoDB" id="5954824at2759"/>
<dbReference type="PAN-GO" id="Q92949">
    <property type="GO annotations" value="4 GO annotations based on evolutionary models"/>
</dbReference>
<dbReference type="PhylomeDB" id="Q92949"/>
<dbReference type="TreeFam" id="TF333250"/>
<dbReference type="PathwayCommons" id="Q92949"/>
<dbReference type="SignaLink" id="Q92949"/>
<dbReference type="SIGNOR" id="Q92949"/>
<dbReference type="BioGRID-ORCS" id="2302">
    <property type="hits" value="16 hits in 1167 CRISPR screens"/>
</dbReference>
<dbReference type="ChiTaRS" id="FOXJ1">
    <property type="organism name" value="human"/>
</dbReference>
<dbReference type="GeneWiki" id="FOXJ1"/>
<dbReference type="GenomeRNAi" id="2302"/>
<dbReference type="Pharos" id="Q92949">
    <property type="development level" value="Tbio"/>
</dbReference>
<dbReference type="PRO" id="PR:Q92949"/>
<dbReference type="Proteomes" id="UP000005640">
    <property type="component" value="Chromosome 17"/>
</dbReference>
<dbReference type="RNAct" id="Q92949">
    <property type="molecule type" value="protein"/>
</dbReference>
<dbReference type="Bgee" id="ENSG00000129654">
    <property type="expression patterns" value="Expressed in right uterine tube and 126 other cell types or tissues"/>
</dbReference>
<dbReference type="ExpressionAtlas" id="Q92949">
    <property type="expression patterns" value="baseline and differential"/>
</dbReference>
<dbReference type="GO" id="GO:0000785">
    <property type="term" value="C:chromatin"/>
    <property type="evidence" value="ECO:0000247"/>
    <property type="project" value="NTNU_SB"/>
</dbReference>
<dbReference type="GO" id="GO:0005634">
    <property type="term" value="C:nucleus"/>
    <property type="evidence" value="ECO:0000314"/>
    <property type="project" value="BHF-UCL"/>
</dbReference>
<dbReference type="GO" id="GO:0003677">
    <property type="term" value="F:DNA binding"/>
    <property type="evidence" value="ECO:0000303"/>
    <property type="project" value="UniProtKB"/>
</dbReference>
<dbReference type="GO" id="GO:0001228">
    <property type="term" value="F:DNA-binding transcription activator activity, RNA polymerase II-specific"/>
    <property type="evidence" value="ECO:0000250"/>
    <property type="project" value="UniProtKB"/>
</dbReference>
<dbReference type="GO" id="GO:0003700">
    <property type="term" value="F:DNA-binding transcription factor activity"/>
    <property type="evidence" value="ECO:0000303"/>
    <property type="project" value="UniProtKB"/>
</dbReference>
<dbReference type="GO" id="GO:0000981">
    <property type="term" value="F:DNA-binding transcription factor activity, RNA polymerase II-specific"/>
    <property type="evidence" value="ECO:0000247"/>
    <property type="project" value="NTNU_SB"/>
</dbReference>
<dbReference type="GO" id="GO:0000978">
    <property type="term" value="F:RNA polymerase II cis-regulatory region sequence-specific DNA binding"/>
    <property type="evidence" value="ECO:0000318"/>
    <property type="project" value="GO_Central"/>
</dbReference>
<dbReference type="GO" id="GO:0000976">
    <property type="term" value="F:transcription cis-regulatory region binding"/>
    <property type="evidence" value="ECO:0000314"/>
    <property type="project" value="BHF-UCL"/>
</dbReference>
<dbReference type="GO" id="GO:0030036">
    <property type="term" value="P:actin cytoskeleton organization"/>
    <property type="evidence" value="ECO:0000250"/>
    <property type="project" value="BHF-UCL"/>
</dbReference>
<dbReference type="GO" id="GO:0035082">
    <property type="term" value="P:axoneme assembly"/>
    <property type="evidence" value="ECO:0000315"/>
    <property type="project" value="UniProtKB"/>
</dbReference>
<dbReference type="GO" id="GO:0007420">
    <property type="term" value="P:brain development"/>
    <property type="evidence" value="ECO:0000250"/>
    <property type="project" value="BHF-UCL"/>
</dbReference>
<dbReference type="GO" id="GO:0048469">
    <property type="term" value="P:cell maturation"/>
    <property type="evidence" value="ECO:0007669"/>
    <property type="project" value="Ensembl"/>
</dbReference>
<dbReference type="GO" id="GO:0002508">
    <property type="term" value="P:central tolerance induction"/>
    <property type="evidence" value="ECO:0000250"/>
    <property type="project" value="BHF-UCL"/>
</dbReference>
<dbReference type="GO" id="GO:0032053">
    <property type="term" value="P:ciliary basal body organization"/>
    <property type="evidence" value="ECO:0000315"/>
    <property type="project" value="UniProtKB"/>
</dbReference>
<dbReference type="GO" id="GO:0060271">
    <property type="term" value="P:cilium assembly"/>
    <property type="evidence" value="ECO:0000315"/>
    <property type="project" value="UniProtKB"/>
</dbReference>
<dbReference type="GO" id="GO:0007368">
    <property type="term" value="P:determination of left/right symmetry"/>
    <property type="evidence" value="ECO:0000315"/>
    <property type="project" value="UniProtKB"/>
</dbReference>
<dbReference type="GO" id="GO:0060429">
    <property type="term" value="P:epithelium development"/>
    <property type="evidence" value="ECO:0000250"/>
    <property type="project" value="BHF-UCL"/>
</dbReference>
<dbReference type="GO" id="GO:0035089">
    <property type="term" value="P:establishment of apical/basal cell polarity"/>
    <property type="evidence" value="ECO:0000250"/>
    <property type="project" value="BHF-UCL"/>
</dbReference>
<dbReference type="GO" id="GO:0072016">
    <property type="term" value="P:glomerular parietal epithelial cell development"/>
    <property type="evidence" value="ECO:0000270"/>
    <property type="project" value="BHF-UCL"/>
</dbReference>
<dbReference type="GO" id="GO:0007507">
    <property type="term" value="P:heart development"/>
    <property type="evidence" value="ECO:0007669"/>
    <property type="project" value="Ensembl"/>
</dbReference>
<dbReference type="GO" id="GO:0006959">
    <property type="term" value="P:humoral immune response"/>
    <property type="evidence" value="ECO:0000250"/>
    <property type="project" value="BHF-UCL"/>
</dbReference>
<dbReference type="GO" id="GO:0050900">
    <property type="term" value="P:leukocyte migration"/>
    <property type="evidence" value="ECO:0000250"/>
    <property type="project" value="BHF-UCL"/>
</dbReference>
<dbReference type="GO" id="GO:0060428">
    <property type="term" value="P:lung epithelium development"/>
    <property type="evidence" value="ECO:0000270"/>
    <property type="project" value="BHF-UCL"/>
</dbReference>
<dbReference type="GO" id="GO:0035502">
    <property type="term" value="P:metanephric part of ureteric bud development"/>
    <property type="evidence" value="ECO:0000270"/>
    <property type="project" value="BHF-UCL"/>
</dbReference>
<dbReference type="GO" id="GO:0044458">
    <property type="term" value="P:motile cilium assembly"/>
    <property type="evidence" value="ECO:0007669"/>
    <property type="project" value="Ensembl"/>
</dbReference>
<dbReference type="GO" id="GO:0050869">
    <property type="term" value="P:negative regulation of B cell activation"/>
    <property type="evidence" value="ECO:0000250"/>
    <property type="project" value="BHF-UCL"/>
</dbReference>
<dbReference type="GO" id="GO:0002635">
    <property type="term" value="P:negative regulation of germinal center formation"/>
    <property type="evidence" value="ECO:0000250"/>
    <property type="project" value="BHF-UCL"/>
</dbReference>
<dbReference type="GO" id="GO:0002924">
    <property type="term" value="P:negative regulation of humoral immune response mediated by circulating immunoglobulin"/>
    <property type="evidence" value="ECO:0000250"/>
    <property type="project" value="BHF-UCL"/>
</dbReference>
<dbReference type="GO" id="GO:0032715">
    <property type="term" value="P:negative regulation of interleukin-6 production"/>
    <property type="evidence" value="ECO:0000250"/>
    <property type="project" value="BHF-UCL"/>
</dbReference>
<dbReference type="GO" id="GO:1901223">
    <property type="term" value="P:negative regulation of non-canonical NF-kappaB signal transduction"/>
    <property type="evidence" value="ECO:0000250"/>
    <property type="project" value="BHF-UCL"/>
</dbReference>
<dbReference type="GO" id="GO:0033085">
    <property type="term" value="P:negative regulation of T cell differentiation in thymus"/>
    <property type="evidence" value="ECO:0000250"/>
    <property type="project" value="BHF-UCL"/>
</dbReference>
<dbReference type="GO" id="GO:0042130">
    <property type="term" value="P:negative regulation of T cell proliferation"/>
    <property type="evidence" value="ECO:0007669"/>
    <property type="project" value="Ensembl"/>
</dbReference>
<dbReference type="GO" id="GO:0000122">
    <property type="term" value="P:negative regulation of transcription by RNA polymerase II"/>
    <property type="evidence" value="ECO:0000250"/>
    <property type="project" value="BHF-UCL"/>
</dbReference>
<dbReference type="GO" id="GO:0007389">
    <property type="term" value="P:pattern specification process"/>
    <property type="evidence" value="ECO:0000250"/>
    <property type="project" value="BHF-UCL"/>
</dbReference>
<dbReference type="GO" id="GO:0002897">
    <property type="term" value="P:positive regulation of central B cell tolerance induction"/>
    <property type="evidence" value="ECO:0000250"/>
    <property type="project" value="BHF-UCL"/>
</dbReference>
<dbReference type="GO" id="GO:1901248">
    <property type="term" value="P:positive regulation of lung ciliated cell differentiation"/>
    <property type="evidence" value="ECO:0000314"/>
    <property type="project" value="BHF-UCL"/>
</dbReference>
<dbReference type="GO" id="GO:0045944">
    <property type="term" value="P:positive regulation of transcription by RNA polymerase II"/>
    <property type="evidence" value="ECO:0000314"/>
    <property type="project" value="BHF-UCL"/>
</dbReference>
<dbReference type="GO" id="GO:0008104">
    <property type="term" value="P:protein localization"/>
    <property type="evidence" value="ECO:0000315"/>
    <property type="project" value="UniProtKB"/>
</dbReference>
<dbReference type="GO" id="GO:0006357">
    <property type="term" value="P:regulation of transcription by RNA polymerase II"/>
    <property type="evidence" value="ECO:0000318"/>
    <property type="project" value="GO_Central"/>
</dbReference>
<dbReference type="GO" id="GO:0007283">
    <property type="term" value="P:spermatogenesis"/>
    <property type="evidence" value="ECO:0000303"/>
    <property type="project" value="UniProtKB"/>
</dbReference>
<dbReference type="CDD" id="cd20023">
    <property type="entry name" value="FH_FOXJ1"/>
    <property type="match status" value="1"/>
</dbReference>
<dbReference type="FunFam" id="1.10.10.10:FF:000030">
    <property type="entry name" value="Forkhead box protein K2"/>
    <property type="match status" value="1"/>
</dbReference>
<dbReference type="Gene3D" id="1.10.10.10">
    <property type="entry name" value="Winged helix-like DNA-binding domain superfamily/Winged helix DNA-binding domain"/>
    <property type="match status" value="1"/>
</dbReference>
<dbReference type="InterPro" id="IPR047512">
    <property type="entry name" value="FH_FOXJ1"/>
</dbReference>
<dbReference type="InterPro" id="IPR001766">
    <property type="entry name" value="Fork_head_dom"/>
</dbReference>
<dbReference type="InterPro" id="IPR047513">
    <property type="entry name" value="FOXJ1"/>
</dbReference>
<dbReference type="InterPro" id="IPR018122">
    <property type="entry name" value="TF_fork_head_CS_1"/>
</dbReference>
<dbReference type="InterPro" id="IPR030456">
    <property type="entry name" value="TF_fork_head_CS_2"/>
</dbReference>
<dbReference type="InterPro" id="IPR036388">
    <property type="entry name" value="WH-like_DNA-bd_sf"/>
</dbReference>
<dbReference type="InterPro" id="IPR036390">
    <property type="entry name" value="WH_DNA-bd_sf"/>
</dbReference>
<dbReference type="PANTHER" id="PTHR46805">
    <property type="entry name" value="FORKHEAD BOX PROTEIN J1"/>
    <property type="match status" value="1"/>
</dbReference>
<dbReference type="PANTHER" id="PTHR46805:SF1">
    <property type="entry name" value="FORKHEAD BOX PROTEIN J1"/>
    <property type="match status" value="1"/>
</dbReference>
<dbReference type="Pfam" id="PF00250">
    <property type="entry name" value="Forkhead"/>
    <property type="match status" value="1"/>
</dbReference>
<dbReference type="PRINTS" id="PR00053">
    <property type="entry name" value="FORKHEAD"/>
</dbReference>
<dbReference type="SMART" id="SM00339">
    <property type="entry name" value="FH"/>
    <property type="match status" value="1"/>
</dbReference>
<dbReference type="SUPFAM" id="SSF46785">
    <property type="entry name" value="Winged helix' DNA-binding domain"/>
    <property type="match status" value="1"/>
</dbReference>
<dbReference type="PROSITE" id="PS00657">
    <property type="entry name" value="FORK_HEAD_1"/>
    <property type="match status" value="1"/>
</dbReference>
<dbReference type="PROSITE" id="PS00658">
    <property type="entry name" value="FORK_HEAD_2"/>
    <property type="match status" value="1"/>
</dbReference>
<dbReference type="PROSITE" id="PS50039">
    <property type="entry name" value="FORK_HEAD_3"/>
    <property type="match status" value="1"/>
</dbReference>
<gene>
    <name evidence="9" type="primary">FOXJ1</name>
    <name evidence="6" type="synonym">FKHL13</name>
    <name evidence="7" type="synonym">HFH4</name>
</gene>
<feature type="chain" id="PRO_0000091850" description="Forkhead box protein J1">
    <location>
        <begin position="1"/>
        <end position="421"/>
    </location>
</feature>
<feature type="DNA-binding region" description="Fork-head" evidence="2">
    <location>
        <begin position="120"/>
        <end position="210"/>
    </location>
</feature>
<feature type="region of interest" description="Disordered" evidence="3">
    <location>
        <begin position="1"/>
        <end position="34"/>
    </location>
</feature>
<feature type="region of interest" description="Disordered" evidence="3">
    <location>
        <begin position="48"/>
        <end position="116"/>
    </location>
</feature>
<feature type="region of interest" description="Disordered" evidence="3">
    <location>
        <begin position="261"/>
        <end position="302"/>
    </location>
</feature>
<feature type="compositionally biased region" description="Low complexity" evidence="3">
    <location>
        <begin position="66"/>
        <end position="80"/>
    </location>
</feature>
<feature type="compositionally biased region" description="Polar residues" evidence="3">
    <location>
        <begin position="90"/>
        <end position="99"/>
    </location>
</feature>
<feature type="compositionally biased region" description="Basic residues" evidence="3">
    <location>
        <begin position="271"/>
        <end position="284"/>
    </location>
</feature>
<feature type="sequence variant" id="VAR_083456" description="In CILD43; reduced number of cilia and mislocalized basal bodies; defects of axonemal microtubular organization; loss of ability to propel mucous along the surface of the epithelium; abnormal localization of PTK2." evidence="5">
    <location>
        <begin position="276"/>
        <end position="421"/>
    </location>
</feature>
<feature type="sequence variant" id="VAR_083457" description="In CILD43; reduced number of cilia and mislocalized basal bodies; defects of axonemal microtubular organization; loss of ability to propel mucous along the surface of the epithelium; abnormal localization of PTK2." evidence="5">
    <location>
        <begin position="301"/>
        <end position="421"/>
    </location>
</feature>
<feature type="sequence conflict" description="In Ref. 2; CAA67729/CAA67730." evidence="8" ref="2">
    <original>W</original>
    <variation>C</variation>
    <location>
        <position position="5"/>
    </location>
</feature>
<feature type="sequence conflict" description="In Ref. 2; CAA67729/CAA67730." evidence="8" ref="2">
    <original>A</original>
    <variation>T</variation>
    <location>
        <position position="11"/>
    </location>
</feature>
<feature type="sequence conflict" description="In Ref. 2; CAA67729." evidence="8" ref="2">
    <original>AGPEGG</original>
    <variation>PAGGR</variation>
    <location>
        <begin position="17"/>
        <end position="22"/>
    </location>
</feature>
<feature type="sequence conflict" description="In Ref. 1; AAB09039." evidence="8" ref="1">
    <original>G</original>
    <variation>A</variation>
    <location>
        <position position="56"/>
    </location>
</feature>
<feature type="sequence conflict" description="In Ref. 2; CAA67729/CAA67730." evidence="8" ref="2">
    <original>A</original>
    <variation>P</variation>
    <location>
        <position position="257"/>
    </location>
</feature>
<feature type="sequence conflict" description="In Ref. 2; CAA67729." evidence="8" ref="2">
    <original>GWGAGEGRLGHKRKQPLPKRVAKVPR</original>
    <variation>VWVQARAGWDISPNTLCPRGGQGPA</variation>
    <location>
        <begin position="262"/>
        <end position="287"/>
    </location>
</feature>
<feature type="sequence conflict" description="In Ref. 1; AAB09039." evidence="8" ref="1">
    <original>W</original>
    <variation>L</variation>
    <location>
        <position position="311"/>
    </location>
</feature>
<feature type="sequence conflict" description="In Ref. 1; AAB09039." evidence="8" ref="1">
    <original>L</original>
    <variation>V</variation>
    <location>
        <position position="330"/>
    </location>
</feature>
<evidence type="ECO:0000250" key="1">
    <source>
        <dbReference type="UniProtKB" id="Q61660"/>
    </source>
</evidence>
<evidence type="ECO:0000255" key="2">
    <source>
        <dbReference type="PROSITE-ProRule" id="PRU00089"/>
    </source>
</evidence>
<evidence type="ECO:0000256" key="3">
    <source>
        <dbReference type="SAM" id="MobiDB-lite"/>
    </source>
</evidence>
<evidence type="ECO:0000269" key="4">
    <source>
    </source>
</evidence>
<evidence type="ECO:0000269" key="5">
    <source>
    </source>
</evidence>
<evidence type="ECO:0000303" key="6">
    <source>
    </source>
</evidence>
<evidence type="ECO:0000303" key="7">
    <source>
    </source>
</evidence>
<evidence type="ECO:0000305" key="8"/>
<evidence type="ECO:0000312" key="9">
    <source>
        <dbReference type="HGNC" id="HGNC:3816"/>
    </source>
</evidence>
<reference key="1">
    <citation type="journal article" date="1998" name="Am. J. Physiol.">
        <title>A human forkhead/winged-helix transcription factor expressed in developing pulmonary and renal epithelium.</title>
        <authorList>
            <person name="Pelletier G.J."/>
            <person name="Brody S.L."/>
            <person name="Liapis H."/>
            <person name="White R.A."/>
            <person name="Hackett B.P."/>
        </authorList>
    </citation>
    <scope>NUCLEOTIDE SEQUENCE [MRNA]</scope>
    <source>
        <tissue>Fetal lung</tissue>
    </source>
</reference>
<reference key="2">
    <citation type="journal article" date="1997" name="Genomics">
        <title>The human hepatocyte nuclear factor 3/fork head gene FKHL13: genomic structure and pattern of expression.</title>
        <authorList>
            <person name="Murphy D.B."/>
            <person name="Seemann S."/>
            <person name="Wiese S."/>
            <person name="Kirschner R."/>
            <person name="Grzeschik K.H."/>
            <person name="Thies U."/>
        </authorList>
    </citation>
    <scope>NUCLEOTIDE SEQUENCE [GENOMIC DNA / MRNA]</scope>
    <source>
        <tissue>Testis</tissue>
    </source>
</reference>
<reference key="3">
    <citation type="submission" date="2000-02" db="EMBL/GenBank/DDBJ databases">
        <title>No deleterious mutations were found in the HFH-4 gene in patients with primary ciliary dyskinesia.</title>
        <authorList>
            <person name="Maiti A.K."/>
            <person name="Bartoloni L."/>
            <person name="Rossier C."/>
            <person name="Blouin J.-L."/>
            <person name="Antonarakis S.E."/>
        </authorList>
    </citation>
    <scope>NUCLEOTIDE SEQUENCE [GENOMIC DNA]</scope>
</reference>
<reference key="4">
    <citation type="journal article" date="2004" name="Genome Res.">
        <title>The status, quality, and expansion of the NIH full-length cDNA project: the Mammalian Gene Collection (MGC).</title>
        <authorList>
            <consortium name="The MGC Project Team"/>
        </authorList>
    </citation>
    <scope>NUCLEOTIDE SEQUENCE [LARGE SCALE MRNA]</scope>
    <source>
        <tissue>Brain</tissue>
    </source>
</reference>
<reference key="5">
    <citation type="journal article" date="2006" name="J. Hum. Genet.">
        <title>Identification of single nucleotide polymorphisms in FOXJ1 and their association with allergic rhinitis.</title>
        <authorList>
            <person name="Li C.-S."/>
            <person name="Chae S.-C."/>
            <person name="Lee J.-H."/>
            <person name="Zhang Q."/>
            <person name="Chung H.-T."/>
        </authorList>
    </citation>
    <scope>INVOLVEMENT IN SUSCEPTIBILITY TO ALRH</scope>
</reference>
<reference key="6">
    <citation type="journal article" date="2019" name="Am. J. Hum. Genet.">
        <title>De Novo Mutations in FOXJ1 Result in a Motile Ciliopathy with Hydrocephalus and Randomization of Left/Right Body Asymmetry.</title>
        <authorList>
            <person name="Wallmeier J."/>
            <person name="Frank D."/>
            <person name="Shoemark A."/>
            <person name="Noethe-Menchen T."/>
            <person name="Cindric S."/>
            <person name="Olbrich H."/>
            <person name="Loges N.T."/>
            <person name="Aprea I."/>
            <person name="Dougherty G.W."/>
            <person name="Pennekamp P."/>
            <person name="Kaiser T."/>
            <person name="Mitchison H.M."/>
            <person name="Hogg C."/>
            <person name="Carr S.B."/>
            <person name="Zariwala M.A."/>
            <person name="Ferkol T."/>
            <person name="Leigh M.W."/>
            <person name="Davis S.D."/>
            <person name="Atkinson J."/>
            <person name="Dutcher S.K."/>
            <person name="Knowles M.R."/>
            <person name="Thiele H."/>
            <person name="Altmueller J."/>
            <person name="Krenz H."/>
            <person name="Woeste M."/>
            <person name="Brentrup A."/>
            <person name="Ahrens F."/>
            <person name="Vogelberg C."/>
            <person name="Morris-Rosendahl D.J."/>
            <person name="Omran H."/>
        </authorList>
    </citation>
    <scope>VARIANTS CILD43 276-GLN--LEU-421 DEL AND 301-GLU--LEU-421 DEL</scope>
    <scope>CHARACTERIZATION OF VARIANTS CILD43 276-GLN--LEU-421 DEL AND 301-GLU--LEU-421 DEL</scope>
    <scope>FUNCTION</scope>
</reference>
<proteinExistence type="evidence at protein level"/>
<organism>
    <name type="scientific">Homo sapiens</name>
    <name type="common">Human</name>
    <dbReference type="NCBI Taxonomy" id="9606"/>
    <lineage>
        <taxon>Eukaryota</taxon>
        <taxon>Metazoa</taxon>
        <taxon>Chordata</taxon>
        <taxon>Craniata</taxon>
        <taxon>Vertebrata</taxon>
        <taxon>Euteleostomi</taxon>
        <taxon>Mammalia</taxon>
        <taxon>Eutheria</taxon>
        <taxon>Euarchontoglires</taxon>
        <taxon>Primates</taxon>
        <taxon>Haplorrhini</taxon>
        <taxon>Catarrhini</taxon>
        <taxon>Hominidae</taxon>
        <taxon>Homo</taxon>
    </lineage>
</organism>
<protein>
    <recommendedName>
        <fullName evidence="8">Forkhead box protein J1</fullName>
    </recommendedName>
    <alternativeName>
        <fullName evidence="6">Forkhead-related protein FKHL13</fullName>
    </alternativeName>
    <alternativeName>
        <fullName evidence="7">Hepatocyte nuclear factor 3 forkhead homolog 4</fullName>
        <shortName evidence="7">HFH-4</shortName>
    </alternativeName>
</protein>
<name>FOXJ1_HUMAN</name>
<sequence length="421" mass="45247">MAESWLRLSGAGPAEEAGPEGGLEEPDALDDSLTSLQWLQEFSILNAKAPALPPGGTDPHGYHQVPGSAAPGSPLAADPACLGQPHTPGKPTSSCTSRSAPPGLQAPPPDDVDYATNPHVKPPYSYATLICMAMQASKATKITLSAIYKWITDNFCYFRHADPTWQNSIRHNLSLNKCFIKVPREKDEPGKGGFWRIDPQYAERLLSGAFKKRRLPPVHIHPAFARQAAQEPSAVPRAGPLTVNTEAQQLLREFEEATGEAGWGAGEGRLGHKRKQPLPKRVAKVPRPPSTLLPTPEEQGELEPLKGNFDWEAIFDAGTLGGELGALEALELSPPLSPASHVDVDLTIHGRHIDCPATWGPSVEQAADSLDFDETFLATSFLQHPWDESGSGCLPPEPLFEAGDATLASDLQDWASVGAFL</sequence>
<comment type="function">
    <text evidence="1 5">Transcription factor specifically required for the formation of motile cilia (PubMed:31630787). Acts by activating transcription of genes that mediate assembly of motile cilia, such as CFAP157. Binds the DNA consensus sequences 5'-HWDTGTTTGTTTA-3' or 5'-KTTTGTTGTTKTW-3' (where H is not G, W is A or T, D is not C, and K is G or T). Activates the transcription of a variety of ciliary proteins in the developing brain and lung.</text>
</comment>
<comment type="interaction">
    <interactant intactId="EBI-1760377">
        <id>Q92949</id>
    </interactant>
    <interactant intactId="EBI-746731">
        <id>P48378</id>
        <label>RFX2</label>
    </interactant>
    <organismsDiffer>false</organismsDiffer>
    <experiments>7</experiments>
</comment>
<comment type="subcellular location">
    <subcellularLocation>
        <location evidence="1">Nucleus</location>
    </subcellularLocation>
</comment>
<comment type="tissue specificity">
    <text>Testis, oviduct, lung and brain cortex.</text>
</comment>
<comment type="developmental stage">
    <text>Expressed in developing lung, kidney and central nervous system.</text>
</comment>
<comment type="disease" evidence="4">
    <disease id="DI-02868">
        <name>Allergic rhinitis</name>
        <acronym>ALRH</acronym>
        <description>A common disease with complex inheritance characterized by mucosal inflammation caused by allergen exposure.</description>
        <dbReference type="MIM" id="607154"/>
    </disease>
    <text>Disease susceptibility may be associated with variants affecting the gene represented in this entry.</text>
</comment>
<comment type="disease" evidence="5">
    <disease id="DI-05715">
        <name>Ciliary dyskinesia, primary, 43</name>
        <acronym>CILD43</acronym>
        <description>A form of primary ciliary dyskinesia, a disorder characterized by abnormalities of motile cilia. Respiratory infections leading to chronic inflammation and bronchiectasis are recurrent, due to defects in the respiratory cilia. Patients with this disorder also develop significant obstructive hydrocephalus. Other more variable features include infertility and about a 50% chance of situs inversus or other left-right asymmetry defects. CILD43 inheritance is autosomal dominant.</description>
        <dbReference type="MIM" id="618699"/>
    </disease>
    <text>The disease is caused by variants affecting the gene represented in this entry.</text>
</comment>
<comment type="similarity">
    <text evidence="8">Belongs to the FOXJ1 family.</text>
</comment>
<accession>Q92949</accession>
<accession>O00630</accession>